<feature type="chain" id="PRO_0000321624" description="Octanoyltransferase">
    <location>
        <begin position="1"/>
        <end position="222"/>
    </location>
</feature>
<feature type="domain" description="BPL/LPL catalytic" evidence="2">
    <location>
        <begin position="34"/>
        <end position="214"/>
    </location>
</feature>
<feature type="active site" description="Acyl-thioester intermediate" evidence="1">
    <location>
        <position position="175"/>
    </location>
</feature>
<feature type="binding site" evidence="1">
    <location>
        <begin position="72"/>
        <end position="79"/>
    </location>
    <ligand>
        <name>substrate</name>
    </ligand>
</feature>
<feature type="binding site" evidence="1">
    <location>
        <begin position="144"/>
        <end position="146"/>
    </location>
    <ligand>
        <name>substrate</name>
    </ligand>
</feature>
<feature type="binding site" evidence="1">
    <location>
        <begin position="157"/>
        <end position="159"/>
    </location>
    <ligand>
        <name>substrate</name>
    </ligand>
</feature>
<feature type="site" description="Lowers pKa of active site Cys" evidence="1">
    <location>
        <position position="141"/>
    </location>
</feature>
<comment type="function">
    <text evidence="1">Catalyzes the transfer of endogenously produced octanoic acid from octanoyl-acyl-carrier-protein onto the lipoyl domains of lipoate-dependent enzymes. Lipoyl-ACP can also act as a substrate although octanoyl-ACP is likely to be the physiological substrate.</text>
</comment>
<comment type="catalytic activity">
    <reaction evidence="1">
        <text>octanoyl-[ACP] + L-lysyl-[protein] = N(6)-octanoyl-L-lysyl-[protein] + holo-[ACP] + H(+)</text>
        <dbReference type="Rhea" id="RHEA:17665"/>
        <dbReference type="Rhea" id="RHEA-COMP:9636"/>
        <dbReference type="Rhea" id="RHEA-COMP:9685"/>
        <dbReference type="Rhea" id="RHEA-COMP:9752"/>
        <dbReference type="Rhea" id="RHEA-COMP:9928"/>
        <dbReference type="ChEBI" id="CHEBI:15378"/>
        <dbReference type="ChEBI" id="CHEBI:29969"/>
        <dbReference type="ChEBI" id="CHEBI:64479"/>
        <dbReference type="ChEBI" id="CHEBI:78463"/>
        <dbReference type="ChEBI" id="CHEBI:78809"/>
        <dbReference type="EC" id="2.3.1.181"/>
    </reaction>
</comment>
<comment type="pathway">
    <text evidence="1">Protein modification; protein lipoylation via endogenous pathway; protein N(6)-(lipoyl)lysine from octanoyl-[acyl-carrier-protein]: step 1/2.</text>
</comment>
<comment type="subcellular location">
    <subcellularLocation>
        <location evidence="1">Cytoplasm</location>
    </subcellularLocation>
</comment>
<comment type="miscellaneous">
    <text evidence="1">In the reaction, the free carboxyl group of octanoic acid is attached via an amide linkage to the epsilon-amino group of a specific lysine residue of lipoyl domains of lipoate-dependent enzymes.</text>
</comment>
<comment type="similarity">
    <text evidence="1">Belongs to the LipB family.</text>
</comment>
<evidence type="ECO:0000255" key="1">
    <source>
        <dbReference type="HAMAP-Rule" id="MF_00013"/>
    </source>
</evidence>
<evidence type="ECO:0000255" key="2">
    <source>
        <dbReference type="PROSITE-ProRule" id="PRU01067"/>
    </source>
</evidence>
<accession>A0JVC9</accession>
<reference key="1">
    <citation type="journal article" date="2013" name="Stand. Genomic Sci.">
        <title>Complete genome sequence of Arthrobacter sp. strain FB24.</title>
        <authorList>
            <person name="Nakatsu C.H."/>
            <person name="Barabote R."/>
            <person name="Thompson S."/>
            <person name="Bruce D."/>
            <person name="Detter C."/>
            <person name="Brettin T."/>
            <person name="Han C."/>
            <person name="Beasley F."/>
            <person name="Chen W."/>
            <person name="Konopka A."/>
            <person name="Xie G."/>
        </authorList>
    </citation>
    <scope>NUCLEOTIDE SEQUENCE [LARGE SCALE GENOMIC DNA]</scope>
    <source>
        <strain>FB24</strain>
    </source>
</reference>
<dbReference type="EC" id="2.3.1.181" evidence="1"/>
<dbReference type="EMBL" id="CP000454">
    <property type="protein sequence ID" value="ABK02999.1"/>
    <property type="molecule type" value="Genomic_DNA"/>
</dbReference>
<dbReference type="SMR" id="A0JVC9"/>
<dbReference type="STRING" id="290399.Arth_1605"/>
<dbReference type="KEGG" id="art:Arth_1605"/>
<dbReference type="eggNOG" id="COG0321">
    <property type="taxonomic scope" value="Bacteria"/>
</dbReference>
<dbReference type="HOGENOM" id="CLU_035168_2_1_11"/>
<dbReference type="OrthoDB" id="9787061at2"/>
<dbReference type="UniPathway" id="UPA00538">
    <property type="reaction ID" value="UER00592"/>
</dbReference>
<dbReference type="Proteomes" id="UP000000754">
    <property type="component" value="Chromosome"/>
</dbReference>
<dbReference type="GO" id="GO:0005737">
    <property type="term" value="C:cytoplasm"/>
    <property type="evidence" value="ECO:0007669"/>
    <property type="project" value="UniProtKB-SubCell"/>
</dbReference>
<dbReference type="GO" id="GO:0033819">
    <property type="term" value="F:lipoyl(octanoyl) transferase activity"/>
    <property type="evidence" value="ECO:0007669"/>
    <property type="project" value="UniProtKB-EC"/>
</dbReference>
<dbReference type="GO" id="GO:0036211">
    <property type="term" value="P:protein modification process"/>
    <property type="evidence" value="ECO:0007669"/>
    <property type="project" value="InterPro"/>
</dbReference>
<dbReference type="CDD" id="cd16444">
    <property type="entry name" value="LipB"/>
    <property type="match status" value="1"/>
</dbReference>
<dbReference type="Gene3D" id="3.30.930.10">
    <property type="entry name" value="Bira Bifunctional Protein, Domain 2"/>
    <property type="match status" value="1"/>
</dbReference>
<dbReference type="HAMAP" id="MF_00013">
    <property type="entry name" value="LipB"/>
    <property type="match status" value="1"/>
</dbReference>
<dbReference type="InterPro" id="IPR045864">
    <property type="entry name" value="aa-tRNA-synth_II/BPL/LPL"/>
</dbReference>
<dbReference type="InterPro" id="IPR004143">
    <property type="entry name" value="BPL_LPL_catalytic"/>
</dbReference>
<dbReference type="InterPro" id="IPR000544">
    <property type="entry name" value="Octanoyltransferase"/>
</dbReference>
<dbReference type="InterPro" id="IPR020605">
    <property type="entry name" value="Octanoyltransferase_CS"/>
</dbReference>
<dbReference type="NCBIfam" id="TIGR00214">
    <property type="entry name" value="lipB"/>
    <property type="match status" value="1"/>
</dbReference>
<dbReference type="NCBIfam" id="NF010925">
    <property type="entry name" value="PRK14345.1"/>
    <property type="match status" value="1"/>
</dbReference>
<dbReference type="PANTHER" id="PTHR10993:SF7">
    <property type="entry name" value="LIPOYLTRANSFERASE 2, MITOCHONDRIAL-RELATED"/>
    <property type="match status" value="1"/>
</dbReference>
<dbReference type="PANTHER" id="PTHR10993">
    <property type="entry name" value="OCTANOYLTRANSFERASE"/>
    <property type="match status" value="1"/>
</dbReference>
<dbReference type="Pfam" id="PF21948">
    <property type="entry name" value="LplA-B_cat"/>
    <property type="match status" value="1"/>
</dbReference>
<dbReference type="PIRSF" id="PIRSF016262">
    <property type="entry name" value="LPLase"/>
    <property type="match status" value="1"/>
</dbReference>
<dbReference type="SUPFAM" id="SSF55681">
    <property type="entry name" value="Class II aaRS and biotin synthetases"/>
    <property type="match status" value="1"/>
</dbReference>
<dbReference type="PROSITE" id="PS51733">
    <property type="entry name" value="BPL_LPL_CATALYTIC"/>
    <property type="match status" value="1"/>
</dbReference>
<dbReference type="PROSITE" id="PS01313">
    <property type="entry name" value="LIPB"/>
    <property type="match status" value="1"/>
</dbReference>
<organism>
    <name type="scientific">Arthrobacter sp. (strain FB24)</name>
    <dbReference type="NCBI Taxonomy" id="290399"/>
    <lineage>
        <taxon>Bacteria</taxon>
        <taxon>Bacillati</taxon>
        <taxon>Actinomycetota</taxon>
        <taxon>Actinomycetes</taxon>
        <taxon>Micrococcales</taxon>
        <taxon>Micrococcaceae</taxon>
        <taxon>Arthrobacter</taxon>
    </lineage>
</organism>
<proteinExistence type="inferred from homology"/>
<sequence length="222" mass="24049">MTLEFSTLGLAPDFVDYMKGWDTQRELHDKVVAAEAPSTVLLLEHAAVYTAGKLTEDHERPFDGTPVVAVDRGGKLTWHGPGQLIAYPILKLKNRSGIRDYVERLEAVMIAVMADYGINAERIKGRAGVWIKADSKGPDRKIAAIGIRVLDGVTMHGIAINCNNDLAPYAQIIACGITDAGVTTMSIEAGRTITPGDIAERVVEEFRKHEEALVSSPEGALL</sequence>
<gene>
    <name evidence="1" type="primary">lipB</name>
    <name type="ordered locus">Arth_1605</name>
</gene>
<name>LIPB_ARTS2</name>
<protein>
    <recommendedName>
        <fullName evidence="1">Octanoyltransferase</fullName>
        <ecNumber evidence="1">2.3.1.181</ecNumber>
    </recommendedName>
    <alternativeName>
        <fullName evidence="1">Lipoate-protein ligase B</fullName>
    </alternativeName>
    <alternativeName>
        <fullName evidence="1">Lipoyl/octanoyl transferase</fullName>
    </alternativeName>
    <alternativeName>
        <fullName evidence="1">Octanoyl-[acyl-carrier-protein]-protein N-octanoyltransferase</fullName>
    </alternativeName>
</protein>
<keyword id="KW-0012">Acyltransferase</keyword>
<keyword id="KW-0963">Cytoplasm</keyword>
<keyword id="KW-1185">Reference proteome</keyword>
<keyword id="KW-0808">Transferase</keyword>